<organism>
    <name type="scientific">Eremothecium gossypii (strain ATCC 10895 / CBS 109.51 / FGSC 9923 / NRRL Y-1056)</name>
    <name type="common">Yeast</name>
    <name type="synonym">Ashbya gossypii</name>
    <dbReference type="NCBI Taxonomy" id="284811"/>
    <lineage>
        <taxon>Eukaryota</taxon>
        <taxon>Fungi</taxon>
        <taxon>Dikarya</taxon>
        <taxon>Ascomycota</taxon>
        <taxon>Saccharomycotina</taxon>
        <taxon>Saccharomycetes</taxon>
        <taxon>Saccharomycetales</taxon>
        <taxon>Saccharomycetaceae</taxon>
        <taxon>Eremothecium</taxon>
    </lineage>
</organism>
<reference key="1">
    <citation type="journal article" date="2004" name="Science">
        <title>The Ashbya gossypii genome as a tool for mapping the ancient Saccharomyces cerevisiae genome.</title>
        <authorList>
            <person name="Dietrich F.S."/>
            <person name="Voegeli S."/>
            <person name="Brachat S."/>
            <person name="Lerch A."/>
            <person name="Gates K."/>
            <person name="Steiner S."/>
            <person name="Mohr C."/>
            <person name="Poehlmann R."/>
            <person name="Luedi P."/>
            <person name="Choi S."/>
            <person name="Wing R.A."/>
            <person name="Flavier A."/>
            <person name="Gaffney T.D."/>
            <person name="Philippsen P."/>
        </authorList>
    </citation>
    <scope>NUCLEOTIDE SEQUENCE [LARGE SCALE GENOMIC DNA]</scope>
    <source>
        <strain>ATCC 10895 / CBS 109.51 / FGSC 9923 / NRRL Y-1056</strain>
    </source>
</reference>
<reference key="2">
    <citation type="journal article" date="2013" name="G3 (Bethesda)">
        <title>Genomes of Ashbya fungi isolated from insects reveal four mating-type loci, numerous translocations, lack of transposons, and distinct gene duplications.</title>
        <authorList>
            <person name="Dietrich F.S."/>
            <person name="Voegeli S."/>
            <person name="Kuo S."/>
            <person name="Philippsen P."/>
        </authorList>
    </citation>
    <scope>GENOME REANNOTATION</scope>
    <source>
        <strain>ATCC 10895 / CBS 109.51 / FGSC 9923 / NRRL Y-1056</strain>
    </source>
</reference>
<protein>
    <recommendedName>
        <fullName>Peroxisome assembly protein 22</fullName>
    </recommendedName>
    <alternativeName>
        <fullName>Peroxin-22</fullName>
    </alternativeName>
</protein>
<name>PEX22_EREGS</name>
<keyword id="KW-0472">Membrane</keyword>
<keyword id="KW-0576">Peroxisome</keyword>
<keyword id="KW-0962">Peroxisome biogenesis</keyword>
<keyword id="KW-1185">Reference proteome</keyword>
<keyword id="KW-0812">Transmembrane</keyword>
<keyword id="KW-1133">Transmembrane helix</keyword>
<gene>
    <name type="primary">PEX22</name>
    <name type="ordered locus">ADR410C</name>
</gene>
<feature type="chain" id="PRO_0000058334" description="Peroxisome assembly protein 22">
    <location>
        <begin position="1"/>
        <end position="144"/>
    </location>
</feature>
<feature type="transmembrane region" description="Helical" evidence="2">
    <location>
        <begin position="13"/>
        <end position="35"/>
    </location>
</feature>
<dbReference type="EMBL" id="AE016817">
    <property type="protein sequence ID" value="AAS52329.1"/>
    <property type="molecule type" value="Genomic_DNA"/>
</dbReference>
<dbReference type="RefSeq" id="NP_984505.1">
    <property type="nucleotide sequence ID" value="NM_209858.1"/>
</dbReference>
<dbReference type="SMR" id="Q758W8"/>
<dbReference type="FunCoup" id="Q758W8">
    <property type="interactions" value="25"/>
</dbReference>
<dbReference type="EnsemblFungi" id="AAS52329">
    <property type="protein sequence ID" value="AAS52329"/>
    <property type="gene ID" value="AGOS_ADR410C"/>
</dbReference>
<dbReference type="GeneID" id="4620670"/>
<dbReference type="KEGG" id="ago:AGOS_ADR410C"/>
<dbReference type="HOGENOM" id="CLU_121063_0_0_1"/>
<dbReference type="InParanoid" id="Q758W8"/>
<dbReference type="OMA" id="SIVAYRW"/>
<dbReference type="OrthoDB" id="10294056at2759"/>
<dbReference type="Proteomes" id="UP000000591">
    <property type="component" value="Chromosome IV"/>
</dbReference>
<dbReference type="GO" id="GO:0005778">
    <property type="term" value="C:peroxisomal membrane"/>
    <property type="evidence" value="ECO:0007669"/>
    <property type="project" value="UniProtKB-SubCell"/>
</dbReference>
<dbReference type="GO" id="GO:0007031">
    <property type="term" value="P:peroxisome organization"/>
    <property type="evidence" value="ECO:0007669"/>
    <property type="project" value="UniProtKB-KW"/>
</dbReference>
<dbReference type="Gene3D" id="3.40.50.11730">
    <property type="entry name" value="Peroxisome assembly protein 22"/>
    <property type="match status" value="1"/>
</dbReference>
<dbReference type="InterPro" id="IPR024359">
    <property type="entry name" value="Peroxin-22"/>
</dbReference>
<dbReference type="InterPro" id="IPR038613">
    <property type="entry name" value="Peroxin-22_C_sf"/>
</dbReference>
<dbReference type="Pfam" id="PF12827">
    <property type="entry name" value="Peroxin-22"/>
    <property type="match status" value="1"/>
</dbReference>
<sequence length="144" mass="15939">MVSKASRDQLRKYGAVSLASLLVAASIVAYRWWNAAPSIEVEKKLRRSVSRCVVVTQGIQNEDMIHDLLFEDTVMLLAPGCTAEGRLKSASRENAYKVISCTTWQSVWACVRHFRKHTLLVRTSEVPSGVPADIGGYVSDISDI</sequence>
<proteinExistence type="inferred from homology"/>
<evidence type="ECO:0000250" key="1"/>
<evidence type="ECO:0000255" key="2"/>
<evidence type="ECO:0000305" key="3"/>
<accession>Q758W8</accession>
<comment type="function">
    <text evidence="1">Involved in peroxisome biogenesis.</text>
</comment>
<comment type="subcellular location">
    <subcellularLocation>
        <location evidence="1">Peroxisome membrane</location>
        <topology evidence="1">Single-pass membrane protein</topology>
    </subcellularLocation>
</comment>
<comment type="similarity">
    <text evidence="3">Belongs to the peroxin-22 family.</text>
</comment>